<dbReference type="EC" id="2.7.4.3" evidence="2"/>
<dbReference type="EMBL" id="CH963849">
    <property type="protein sequence ID" value="EDW74472.1"/>
    <property type="molecule type" value="Genomic_DNA"/>
</dbReference>
<dbReference type="SMR" id="B4MQT3"/>
<dbReference type="STRING" id="7260.B4MQT3"/>
<dbReference type="EnsemblMetazoa" id="FBtr0252029">
    <property type="protein sequence ID" value="FBpp0250521"/>
    <property type="gene ID" value="FBgn0223370"/>
</dbReference>
<dbReference type="EnsemblMetazoa" id="XM_002063450.4">
    <property type="protein sequence ID" value="XP_002063486.1"/>
    <property type="gene ID" value="LOC6640169"/>
</dbReference>
<dbReference type="GeneID" id="6640169"/>
<dbReference type="KEGG" id="dwi:6640169"/>
<dbReference type="CTD" id="204"/>
<dbReference type="eggNOG" id="KOG3078">
    <property type="taxonomic scope" value="Eukaryota"/>
</dbReference>
<dbReference type="HOGENOM" id="CLU_032354_1_0_1"/>
<dbReference type="OMA" id="HYKVDAA"/>
<dbReference type="OrthoDB" id="439792at2759"/>
<dbReference type="PhylomeDB" id="B4MQT3"/>
<dbReference type="Proteomes" id="UP000007798">
    <property type="component" value="Unassembled WGS sequence"/>
</dbReference>
<dbReference type="GO" id="GO:0005829">
    <property type="term" value="C:cytosol"/>
    <property type="evidence" value="ECO:0007669"/>
    <property type="project" value="UniProtKB-SubCell"/>
</dbReference>
<dbReference type="GO" id="GO:0005758">
    <property type="term" value="C:mitochondrial intermembrane space"/>
    <property type="evidence" value="ECO:0007669"/>
    <property type="project" value="UniProtKB-SubCell"/>
</dbReference>
<dbReference type="GO" id="GO:0004017">
    <property type="term" value="F:adenylate kinase activity"/>
    <property type="evidence" value="ECO:0007669"/>
    <property type="project" value="UniProtKB-UniRule"/>
</dbReference>
<dbReference type="GO" id="GO:0005524">
    <property type="term" value="F:ATP binding"/>
    <property type="evidence" value="ECO:0007669"/>
    <property type="project" value="UniProtKB-KW"/>
</dbReference>
<dbReference type="GO" id="GO:0006172">
    <property type="term" value="P:ADP biosynthetic process"/>
    <property type="evidence" value="ECO:0007669"/>
    <property type="project" value="UniProtKB-UniRule"/>
</dbReference>
<dbReference type="GO" id="GO:0046033">
    <property type="term" value="P:AMP metabolic process"/>
    <property type="evidence" value="ECO:0007669"/>
    <property type="project" value="UniProtKB-UniRule"/>
</dbReference>
<dbReference type="GO" id="GO:0046034">
    <property type="term" value="P:ATP metabolic process"/>
    <property type="evidence" value="ECO:0007669"/>
    <property type="project" value="UniProtKB-UniRule"/>
</dbReference>
<dbReference type="CDD" id="cd01428">
    <property type="entry name" value="ADK"/>
    <property type="match status" value="1"/>
</dbReference>
<dbReference type="FunFam" id="3.40.50.300:FF:000106">
    <property type="entry name" value="Adenylate kinase mitochondrial"/>
    <property type="match status" value="1"/>
</dbReference>
<dbReference type="Gene3D" id="3.40.50.300">
    <property type="entry name" value="P-loop containing nucleotide triphosphate hydrolases"/>
    <property type="match status" value="1"/>
</dbReference>
<dbReference type="HAMAP" id="MF_00235">
    <property type="entry name" value="Adenylate_kinase_Adk"/>
    <property type="match status" value="1"/>
</dbReference>
<dbReference type="HAMAP" id="MF_03168">
    <property type="entry name" value="Adenylate_kinase_AK2"/>
    <property type="match status" value="1"/>
</dbReference>
<dbReference type="InterPro" id="IPR006259">
    <property type="entry name" value="Adenyl_kin_sub"/>
</dbReference>
<dbReference type="InterPro" id="IPR000850">
    <property type="entry name" value="Adenylat/UMP-CMP_kin"/>
</dbReference>
<dbReference type="InterPro" id="IPR033690">
    <property type="entry name" value="Adenylat_kinase_CS"/>
</dbReference>
<dbReference type="InterPro" id="IPR007862">
    <property type="entry name" value="Adenylate_kinase_lid-dom"/>
</dbReference>
<dbReference type="InterPro" id="IPR028587">
    <property type="entry name" value="AK2"/>
</dbReference>
<dbReference type="InterPro" id="IPR027417">
    <property type="entry name" value="P-loop_NTPase"/>
</dbReference>
<dbReference type="NCBIfam" id="TIGR01351">
    <property type="entry name" value="adk"/>
    <property type="match status" value="1"/>
</dbReference>
<dbReference type="NCBIfam" id="NF001380">
    <property type="entry name" value="PRK00279.1-2"/>
    <property type="match status" value="1"/>
</dbReference>
<dbReference type="NCBIfam" id="NF001381">
    <property type="entry name" value="PRK00279.1-3"/>
    <property type="match status" value="1"/>
</dbReference>
<dbReference type="NCBIfam" id="NF011100">
    <property type="entry name" value="PRK14527.1"/>
    <property type="match status" value="1"/>
</dbReference>
<dbReference type="PANTHER" id="PTHR23359">
    <property type="entry name" value="NUCLEOTIDE KINASE"/>
    <property type="match status" value="1"/>
</dbReference>
<dbReference type="Pfam" id="PF00406">
    <property type="entry name" value="ADK"/>
    <property type="match status" value="1"/>
</dbReference>
<dbReference type="Pfam" id="PF05191">
    <property type="entry name" value="ADK_lid"/>
    <property type="match status" value="1"/>
</dbReference>
<dbReference type="PRINTS" id="PR00094">
    <property type="entry name" value="ADENYLTKNASE"/>
</dbReference>
<dbReference type="SUPFAM" id="SSF52540">
    <property type="entry name" value="P-loop containing nucleoside triphosphate hydrolases"/>
    <property type="match status" value="1"/>
</dbReference>
<dbReference type="PROSITE" id="PS00113">
    <property type="entry name" value="ADENYLATE_KINASE"/>
    <property type="match status" value="1"/>
</dbReference>
<feature type="chain" id="PRO_0000365712" description="Adenylate kinase">
    <location>
        <begin position="1"/>
        <end position="240"/>
    </location>
</feature>
<feature type="region of interest" description="NMP" evidence="2">
    <location>
        <begin position="48"/>
        <end position="77"/>
    </location>
</feature>
<feature type="region of interest" description="LID" evidence="2">
    <location>
        <begin position="144"/>
        <end position="181"/>
    </location>
</feature>
<feature type="region of interest" description="Disordered" evidence="3">
    <location>
        <begin position="153"/>
        <end position="174"/>
    </location>
</feature>
<feature type="compositionally biased region" description="Basic and acidic residues" evidence="3">
    <location>
        <begin position="154"/>
        <end position="174"/>
    </location>
</feature>
<feature type="binding site" evidence="2">
    <location>
        <begin position="28"/>
        <end position="33"/>
    </location>
    <ligand>
        <name>ATP</name>
        <dbReference type="ChEBI" id="CHEBI:30616"/>
    </ligand>
</feature>
<feature type="binding site" evidence="2">
    <location>
        <position position="49"/>
    </location>
    <ligand>
        <name>AMP</name>
        <dbReference type="ChEBI" id="CHEBI:456215"/>
    </ligand>
</feature>
<feature type="binding site" evidence="2">
    <location>
        <position position="54"/>
    </location>
    <ligand>
        <name>AMP</name>
        <dbReference type="ChEBI" id="CHEBI:456215"/>
    </ligand>
</feature>
<feature type="binding site" evidence="2">
    <location>
        <begin position="75"/>
        <end position="77"/>
    </location>
    <ligand>
        <name>AMP</name>
        <dbReference type="ChEBI" id="CHEBI:456215"/>
    </ligand>
</feature>
<feature type="binding site" evidence="2">
    <location>
        <begin position="103"/>
        <end position="106"/>
    </location>
    <ligand>
        <name>AMP</name>
        <dbReference type="ChEBI" id="CHEBI:456215"/>
    </ligand>
</feature>
<feature type="binding site" evidence="2">
    <location>
        <position position="110"/>
    </location>
    <ligand>
        <name>AMP</name>
        <dbReference type="ChEBI" id="CHEBI:456215"/>
    </ligand>
</feature>
<feature type="binding site" evidence="2">
    <location>
        <position position="145"/>
    </location>
    <ligand>
        <name>ATP</name>
        <dbReference type="ChEBI" id="CHEBI:30616"/>
    </ligand>
</feature>
<feature type="binding site" evidence="2">
    <location>
        <begin position="154"/>
        <end position="155"/>
    </location>
    <ligand>
        <name>ATP</name>
        <dbReference type="ChEBI" id="CHEBI:30616"/>
    </ligand>
</feature>
<feature type="binding site" evidence="2">
    <location>
        <position position="178"/>
    </location>
    <ligand>
        <name>AMP</name>
        <dbReference type="ChEBI" id="CHEBI:456215"/>
    </ligand>
</feature>
<feature type="binding site" evidence="2">
    <location>
        <position position="189"/>
    </location>
    <ligand>
        <name>AMP</name>
        <dbReference type="ChEBI" id="CHEBI:456215"/>
    </ligand>
</feature>
<feature type="binding site" evidence="2">
    <location>
        <position position="217"/>
    </location>
    <ligand>
        <name>ATP</name>
        <dbReference type="ChEBI" id="CHEBI:30616"/>
    </ligand>
</feature>
<feature type="modified residue" description="Phosphoserine" evidence="1">
    <location>
        <position position="48"/>
    </location>
</feature>
<evidence type="ECO:0000250" key="1"/>
<evidence type="ECO:0000255" key="2">
    <source>
        <dbReference type="HAMAP-Rule" id="MF_03168"/>
    </source>
</evidence>
<evidence type="ECO:0000256" key="3">
    <source>
        <dbReference type="SAM" id="MobiDB-lite"/>
    </source>
</evidence>
<protein>
    <recommendedName>
        <fullName evidence="2">Adenylate kinase</fullName>
        <ecNumber evidence="2">2.7.4.3</ecNumber>
    </recommendedName>
    <alternativeName>
        <fullName evidence="2">ATP-AMP transphosphorylase</fullName>
    </alternativeName>
    <alternativeName>
        <fullName evidence="2">ATP:AMP phosphotransferase</fullName>
    </alternativeName>
    <alternativeName>
        <fullName evidence="2">Adenylate kinase cytosolic and mitochondrial</fullName>
    </alternativeName>
    <alternativeName>
        <fullName evidence="2">Adenylate monophosphate kinase</fullName>
    </alternativeName>
</protein>
<accession>B4MQT3</accession>
<proteinExistence type="inferred from homology"/>
<comment type="function">
    <text evidence="2">Catalyzes the reversible transfer of the terminal phosphate group between ATP and AMP. Plays an important role in cellular energy homeostasis and in adenine nucleotide metabolism. Adenylate kinase activity is critical for regulation of the phosphate utilization and the AMP de novo biosynthesis pathways.</text>
</comment>
<comment type="catalytic activity">
    <reaction evidence="2">
        <text>AMP + ATP = 2 ADP</text>
        <dbReference type="Rhea" id="RHEA:12973"/>
        <dbReference type="ChEBI" id="CHEBI:30616"/>
        <dbReference type="ChEBI" id="CHEBI:456215"/>
        <dbReference type="ChEBI" id="CHEBI:456216"/>
        <dbReference type="EC" id="2.7.4.3"/>
    </reaction>
</comment>
<comment type="subunit">
    <text evidence="2">Monomer.</text>
</comment>
<comment type="subcellular location">
    <subcellularLocation>
        <location evidence="2">Cytoplasm</location>
        <location evidence="2">Cytosol</location>
    </subcellularLocation>
    <subcellularLocation>
        <location evidence="2">Mitochondrion intermembrane space</location>
    </subcellularLocation>
    <text evidence="2">Predominantly mitochondrial.</text>
</comment>
<comment type="domain">
    <text evidence="2">Consists of three domains, a large central CORE domain and two small peripheral domains, NMPbind and LID, which undergo movements during catalysis. The LID domain closes over the site of phosphoryl transfer upon ATP binding. Assembling and dissambling the active center during each catalytic cycle provides an effective means to prevent ATP hydrolysis.</text>
</comment>
<comment type="similarity">
    <text evidence="2">Belongs to the adenylate kinase family. AK2 subfamily.</text>
</comment>
<organism>
    <name type="scientific">Drosophila willistoni</name>
    <name type="common">Fruit fly</name>
    <dbReference type="NCBI Taxonomy" id="7260"/>
    <lineage>
        <taxon>Eukaryota</taxon>
        <taxon>Metazoa</taxon>
        <taxon>Ecdysozoa</taxon>
        <taxon>Arthropoda</taxon>
        <taxon>Hexapoda</taxon>
        <taxon>Insecta</taxon>
        <taxon>Pterygota</taxon>
        <taxon>Neoptera</taxon>
        <taxon>Endopterygota</taxon>
        <taxon>Diptera</taxon>
        <taxon>Brachycera</taxon>
        <taxon>Muscomorpha</taxon>
        <taxon>Ephydroidea</taxon>
        <taxon>Drosophilidae</taxon>
        <taxon>Drosophila</taxon>
        <taxon>Sophophora</taxon>
    </lineage>
</organism>
<sequence length="240" mass="26757">MAPTAAVPVERYESENIGINAILLGPPGSGKGTQAPLLKEKFCVCHLSTGDMLRAEISSGSKLGAELKKVMDEGKLVSDELVVNMIDSNLDKPECKNGFLLDGFPRTVVQAQKLDTLLDKRKTNLDAVVEFSIDDNLLVRRITGRLIHQASGRSYHEEFAPPKQPMKDDITGEPLIRRSDDNAEALKKRLESYHKQTKPLVDYYGFRGLHFKVDAARKSSDVFSKIDSIFQRQRSSKVQL</sequence>
<gene>
    <name evidence="2" type="primary">Adk2</name>
    <name type="ORF">GK21378</name>
</gene>
<keyword id="KW-0067">ATP-binding</keyword>
<keyword id="KW-0963">Cytoplasm</keyword>
<keyword id="KW-0418">Kinase</keyword>
<keyword id="KW-0496">Mitochondrion</keyword>
<keyword id="KW-0547">Nucleotide-binding</keyword>
<keyword id="KW-0597">Phosphoprotein</keyword>
<keyword id="KW-1185">Reference proteome</keyword>
<keyword id="KW-0808">Transferase</keyword>
<reference key="1">
    <citation type="journal article" date="2007" name="Nature">
        <title>Evolution of genes and genomes on the Drosophila phylogeny.</title>
        <authorList>
            <consortium name="Drosophila 12 genomes consortium"/>
        </authorList>
    </citation>
    <scope>NUCLEOTIDE SEQUENCE [LARGE SCALE GENOMIC DNA]</scope>
    <source>
        <strain>Tucson 14030-0811.24</strain>
    </source>
</reference>
<name>KAD2_DROWI</name>